<accession>Q63810</accession>
<accession>Q3V067</accession>
<accession>Q5F225</accession>
<evidence type="ECO:0000250" key="1">
    <source>
        <dbReference type="UniProtKB" id="P63098"/>
    </source>
</evidence>
<evidence type="ECO:0000250" key="2">
    <source>
        <dbReference type="UniProtKB" id="P63099"/>
    </source>
</evidence>
<evidence type="ECO:0000255" key="3">
    <source>
        <dbReference type="PROSITE-ProRule" id="PRU00448"/>
    </source>
</evidence>
<evidence type="ECO:0000269" key="4">
    <source>
    </source>
</evidence>
<evidence type="ECO:0000269" key="5">
    <source>
    </source>
</evidence>
<evidence type="ECO:0000269" key="6">
    <source>
    </source>
</evidence>
<evidence type="ECO:0000269" key="7">
    <source>
    </source>
</evidence>
<evidence type="ECO:0000303" key="8">
    <source>
    </source>
</evidence>
<evidence type="ECO:0000305" key="9"/>
<evidence type="ECO:0007744" key="10">
    <source>
        <dbReference type="PDB" id="4ORB"/>
    </source>
</evidence>
<evidence type="ECO:0007744" key="11">
    <source>
    </source>
</evidence>
<evidence type="ECO:0007829" key="12">
    <source>
        <dbReference type="PDB" id="4ORB"/>
    </source>
</evidence>
<protein>
    <recommendedName>
        <fullName>Calcineurin subunit B type 1</fullName>
    </recommendedName>
    <alternativeName>
        <fullName>Protein phosphatase 2B regulatory subunit 1</fullName>
    </alternativeName>
    <alternativeName>
        <fullName>Protein phosphatase 3 regulatory subunit B alpha isoform 1</fullName>
    </alternativeName>
</protein>
<keyword id="KW-0002">3D-structure</keyword>
<keyword id="KW-0025">Alternative splicing</keyword>
<keyword id="KW-0106">Calcium</keyword>
<keyword id="KW-1003">Cell membrane</keyword>
<keyword id="KW-0963">Cytoplasm</keyword>
<keyword id="KW-0903">Direct protein sequencing</keyword>
<keyword id="KW-0449">Lipoprotein</keyword>
<keyword id="KW-0472">Membrane</keyword>
<keyword id="KW-0479">Metal-binding</keyword>
<keyword id="KW-0519">Myristate</keyword>
<keyword id="KW-0597">Phosphoprotein</keyword>
<keyword id="KW-1185">Reference proteome</keyword>
<keyword id="KW-0677">Repeat</keyword>
<dbReference type="EMBL" id="S43864">
    <property type="protein sequence ID" value="AAB23171.1"/>
    <property type="molecule type" value="mRNA"/>
</dbReference>
<dbReference type="EMBL" id="AK133403">
    <property type="protein sequence ID" value="BAE21637.1"/>
    <property type="molecule type" value="mRNA"/>
</dbReference>
<dbReference type="EMBL" id="AK145541">
    <property type="protein sequence ID" value="BAE26495.1"/>
    <property type="molecule type" value="mRNA"/>
</dbReference>
<dbReference type="EMBL" id="AK160938">
    <property type="protein sequence ID" value="BAE36102.1"/>
    <property type="molecule type" value="mRNA"/>
</dbReference>
<dbReference type="EMBL" id="AK163241">
    <property type="protein sequence ID" value="BAE37251.1"/>
    <property type="molecule type" value="mRNA"/>
</dbReference>
<dbReference type="EMBL" id="AL606466">
    <property type="status" value="NOT_ANNOTATED_CDS"/>
    <property type="molecule type" value="Genomic_DNA"/>
</dbReference>
<dbReference type="EMBL" id="AL713926">
    <property type="status" value="NOT_ANNOTATED_CDS"/>
    <property type="molecule type" value="Genomic_DNA"/>
</dbReference>
<dbReference type="CCDS" id="CCDS24448.1">
    <molecule id="Q63810-1"/>
</dbReference>
<dbReference type="PIR" id="JC1220">
    <property type="entry name" value="JC1220"/>
</dbReference>
<dbReference type="RefSeq" id="NP_077779.2">
    <molecule id="Q63810-1"/>
    <property type="nucleotide sequence ID" value="NM_024459.2"/>
</dbReference>
<dbReference type="PDB" id="4ORB">
    <property type="method" value="X-ray"/>
    <property type="resolution" value="3.11 A"/>
    <property type="chains" value="B=1-170"/>
</dbReference>
<dbReference type="PDBsum" id="4ORB"/>
<dbReference type="SMR" id="Q63810"/>
<dbReference type="BioGRID" id="202347">
    <property type="interactions" value="7"/>
</dbReference>
<dbReference type="ComplexPortal" id="CPX-1006">
    <property type="entry name" value="Calcineurin-Calmodulin-AKAP5 complex, beta-R1 variant"/>
</dbReference>
<dbReference type="ComplexPortal" id="CPX-1007">
    <property type="entry name" value="Calcineurin-Calmodulin complex, gamma-R1 variant"/>
</dbReference>
<dbReference type="ComplexPortal" id="CPX-1010">
    <property type="entry name" value="Calcineurin-Calmodulin complex, alpha-R1 variant"/>
</dbReference>
<dbReference type="ComplexPortal" id="CPX-1011">
    <property type="entry name" value="Calcineurin-Calmodulin complex, beta-R1 variant"/>
</dbReference>
<dbReference type="ComplexPortal" id="CPX-1113">
    <property type="entry name" value="Calcineurin-Calmodulin-AKAP5 complex, gamma-R1 variant"/>
</dbReference>
<dbReference type="ComplexPortal" id="CPX-881">
    <property type="entry name" value="Calcineurin-Calmodulin-AKAP5 complex, alpha-R1 variant"/>
</dbReference>
<dbReference type="FunCoup" id="Q63810">
    <property type="interactions" value="3001"/>
</dbReference>
<dbReference type="IntAct" id="Q63810">
    <property type="interactions" value="2"/>
</dbReference>
<dbReference type="MINT" id="Q63810"/>
<dbReference type="STRING" id="10090.ENSMUSP00000099944"/>
<dbReference type="iPTMnet" id="Q63810"/>
<dbReference type="PhosphoSitePlus" id="Q63810"/>
<dbReference type="SwissPalm" id="Q63810"/>
<dbReference type="jPOST" id="Q63810"/>
<dbReference type="PaxDb" id="10090-ENSMUSP00000099944"/>
<dbReference type="PeptideAtlas" id="Q63810"/>
<dbReference type="ProteomicsDB" id="265524">
    <molecule id="Q63810-1"/>
</dbReference>
<dbReference type="ProteomicsDB" id="265525">
    <molecule id="Q63810-2"/>
</dbReference>
<dbReference type="Pumba" id="Q63810"/>
<dbReference type="DNASU" id="19058"/>
<dbReference type="Ensembl" id="ENSMUST00000102880.5">
    <molecule id="Q63810-1"/>
    <property type="protein sequence ID" value="ENSMUSP00000099944.5"/>
    <property type="gene ID" value="ENSMUSG00000033953.11"/>
</dbReference>
<dbReference type="GeneID" id="19058"/>
<dbReference type="KEGG" id="mmu:19058"/>
<dbReference type="UCSC" id="uc007ibz.1">
    <molecule id="Q63810-1"/>
    <property type="organism name" value="mouse"/>
</dbReference>
<dbReference type="AGR" id="MGI:107172"/>
<dbReference type="CTD" id="5534"/>
<dbReference type="MGI" id="MGI:107172">
    <property type="gene designation" value="Ppp3r1"/>
</dbReference>
<dbReference type="VEuPathDB" id="HostDB:ENSMUSG00000033953"/>
<dbReference type="eggNOG" id="KOG0034">
    <property type="taxonomic scope" value="Eukaryota"/>
</dbReference>
<dbReference type="GeneTree" id="ENSGT00940000156530"/>
<dbReference type="HOGENOM" id="CLU_061288_10_1_1"/>
<dbReference type="InParanoid" id="Q63810"/>
<dbReference type="OMA" id="DTNFDRD"/>
<dbReference type="OrthoDB" id="191686at2759"/>
<dbReference type="PhylomeDB" id="Q63810"/>
<dbReference type="TreeFam" id="TF105558"/>
<dbReference type="Reactome" id="R-MMU-111447">
    <property type="pathway name" value="Activation of BAD and translocation to mitochondria"/>
</dbReference>
<dbReference type="Reactome" id="R-MMU-2025928">
    <property type="pathway name" value="Calcineurin activates NFAT"/>
</dbReference>
<dbReference type="Reactome" id="R-MMU-2871809">
    <property type="pathway name" value="FCERI mediated Ca+2 mobilization"/>
</dbReference>
<dbReference type="Reactome" id="R-MMU-4086398">
    <property type="pathway name" value="Ca2+ pathway"/>
</dbReference>
<dbReference type="Reactome" id="R-MMU-5607763">
    <property type="pathway name" value="CLEC7A (Dectin-1) induces NFAT activation"/>
</dbReference>
<dbReference type="BioGRID-ORCS" id="19058">
    <property type="hits" value="7 hits in 78 CRISPR screens"/>
</dbReference>
<dbReference type="ChiTaRS" id="Ppp3r1">
    <property type="organism name" value="mouse"/>
</dbReference>
<dbReference type="EvolutionaryTrace" id="Q63810"/>
<dbReference type="PRO" id="PR:Q63810"/>
<dbReference type="Proteomes" id="UP000000589">
    <property type="component" value="Chromosome 11"/>
</dbReference>
<dbReference type="RNAct" id="Q63810">
    <property type="molecule type" value="protein"/>
</dbReference>
<dbReference type="Bgee" id="ENSMUSG00000033953">
    <property type="expression patterns" value="Expressed in CA3 field of hippocampus and 265 other cell types or tissues"/>
</dbReference>
<dbReference type="GO" id="GO:0005955">
    <property type="term" value="C:calcineurin complex"/>
    <property type="evidence" value="ECO:0000314"/>
    <property type="project" value="UniProtKB"/>
</dbReference>
<dbReference type="GO" id="GO:0005829">
    <property type="term" value="C:cytosol"/>
    <property type="evidence" value="ECO:0000304"/>
    <property type="project" value="Reactome"/>
</dbReference>
<dbReference type="GO" id="GO:0098978">
    <property type="term" value="C:glutamatergic synapse"/>
    <property type="evidence" value="ECO:0000314"/>
    <property type="project" value="SynGO"/>
</dbReference>
<dbReference type="GO" id="GO:0098686">
    <property type="term" value="C:hippocampal mossy fiber to CA3 synapse"/>
    <property type="evidence" value="ECO:0000314"/>
    <property type="project" value="SynGO"/>
</dbReference>
<dbReference type="GO" id="GO:0098688">
    <property type="term" value="C:parallel fiber to Purkinje cell synapse"/>
    <property type="evidence" value="ECO:0000314"/>
    <property type="project" value="SynGO"/>
</dbReference>
<dbReference type="GO" id="GO:0098794">
    <property type="term" value="C:postsynapse"/>
    <property type="evidence" value="ECO:0007669"/>
    <property type="project" value="GOC"/>
</dbReference>
<dbReference type="GO" id="GO:0008287">
    <property type="term" value="C:protein serine/threonine phosphatase complex"/>
    <property type="evidence" value="ECO:0000303"/>
    <property type="project" value="ComplexPortal"/>
</dbReference>
<dbReference type="GO" id="GO:0042383">
    <property type="term" value="C:sarcolemma"/>
    <property type="evidence" value="ECO:0000314"/>
    <property type="project" value="BHF-UCL"/>
</dbReference>
<dbReference type="GO" id="GO:0098685">
    <property type="term" value="C:Schaffer collateral - CA1 synapse"/>
    <property type="evidence" value="ECO:0000314"/>
    <property type="project" value="SynGO"/>
</dbReference>
<dbReference type="GO" id="GO:0045202">
    <property type="term" value="C:synapse"/>
    <property type="evidence" value="ECO:0000314"/>
    <property type="project" value="SynGO"/>
</dbReference>
<dbReference type="GO" id="GO:0005509">
    <property type="term" value="F:calcium ion binding"/>
    <property type="evidence" value="ECO:0007669"/>
    <property type="project" value="InterPro"/>
</dbReference>
<dbReference type="GO" id="GO:0019899">
    <property type="term" value="F:enzyme binding"/>
    <property type="evidence" value="ECO:0000353"/>
    <property type="project" value="BHF-UCL"/>
</dbReference>
<dbReference type="GO" id="GO:0019902">
    <property type="term" value="F:phosphatase binding"/>
    <property type="evidence" value="ECO:0000353"/>
    <property type="project" value="UniProtKB"/>
</dbReference>
<dbReference type="GO" id="GO:0004721">
    <property type="term" value="F:phosphoprotein phosphatase activity"/>
    <property type="evidence" value="ECO:0000315"/>
    <property type="project" value="MGI"/>
</dbReference>
<dbReference type="GO" id="GO:0019904">
    <property type="term" value="F:protein domain specific binding"/>
    <property type="evidence" value="ECO:0007669"/>
    <property type="project" value="Ensembl"/>
</dbReference>
<dbReference type="GO" id="GO:0001569">
    <property type="term" value="P:branching involved in blood vessel morphogenesis"/>
    <property type="evidence" value="ECO:0000315"/>
    <property type="project" value="MGI"/>
</dbReference>
<dbReference type="GO" id="GO:0033173">
    <property type="term" value="P:calcineurin-NFAT signaling cascade"/>
    <property type="evidence" value="ECO:0000316"/>
    <property type="project" value="MGI"/>
</dbReference>
<dbReference type="GO" id="GO:0001837">
    <property type="term" value="P:epithelial to mesenchymal transition"/>
    <property type="evidence" value="ECO:0000315"/>
    <property type="project" value="MGI"/>
</dbReference>
<dbReference type="GO" id="GO:0007507">
    <property type="term" value="P:heart development"/>
    <property type="evidence" value="ECO:0000315"/>
    <property type="project" value="MGI"/>
</dbReference>
<dbReference type="GO" id="GO:0060487">
    <property type="term" value="P:lung epithelial cell differentiation"/>
    <property type="evidence" value="ECO:0000315"/>
    <property type="project" value="MGI"/>
</dbReference>
<dbReference type="GO" id="GO:0022011">
    <property type="term" value="P:myelination in peripheral nervous system"/>
    <property type="evidence" value="ECO:0000315"/>
    <property type="project" value="MGI"/>
</dbReference>
<dbReference type="GO" id="GO:1905949">
    <property type="term" value="P:negative regulation of calcium ion import across plasma membrane"/>
    <property type="evidence" value="ECO:0000303"/>
    <property type="project" value="ComplexPortal"/>
</dbReference>
<dbReference type="GO" id="GO:0070886">
    <property type="term" value="P:positive regulation of calcineurin-NFAT signaling cascade"/>
    <property type="evidence" value="ECO:0000303"/>
    <property type="project" value="ComplexPortal"/>
</dbReference>
<dbReference type="GO" id="GO:1905665">
    <property type="term" value="P:positive regulation of calcium ion import across plasma membrane"/>
    <property type="evidence" value="ECO:0000303"/>
    <property type="project" value="ComplexPortal"/>
</dbReference>
<dbReference type="GO" id="GO:0045944">
    <property type="term" value="P:positive regulation of transcription by RNA polymerase II"/>
    <property type="evidence" value="ECO:0007669"/>
    <property type="project" value="Ensembl"/>
</dbReference>
<dbReference type="GO" id="GO:0099170">
    <property type="term" value="P:postsynaptic modulation of chemical synaptic transmission"/>
    <property type="evidence" value="ECO:0000314"/>
    <property type="project" value="SynGO"/>
</dbReference>
<dbReference type="GO" id="GO:0006606">
    <property type="term" value="P:protein import into nucleus"/>
    <property type="evidence" value="ECO:0000315"/>
    <property type="project" value="MGI"/>
</dbReference>
<dbReference type="GO" id="GO:0034504">
    <property type="term" value="P:protein localization to nucleus"/>
    <property type="evidence" value="ECO:0000315"/>
    <property type="project" value="MGI"/>
</dbReference>
<dbReference type="GO" id="GO:0099149">
    <property type="term" value="P:regulation of postsynaptic neurotransmitter receptor internalization"/>
    <property type="evidence" value="ECO:0000314"/>
    <property type="project" value="SynGO"/>
</dbReference>
<dbReference type="GO" id="GO:0098693">
    <property type="term" value="P:regulation of synaptic vesicle cycle"/>
    <property type="evidence" value="ECO:0000314"/>
    <property type="project" value="SynGO"/>
</dbReference>
<dbReference type="GO" id="GO:0014044">
    <property type="term" value="P:Schwann cell development"/>
    <property type="evidence" value="ECO:0000315"/>
    <property type="project" value="MGI"/>
</dbReference>
<dbReference type="CDD" id="cd00051">
    <property type="entry name" value="EFh"/>
    <property type="match status" value="1"/>
</dbReference>
<dbReference type="FunFam" id="1.10.238.10:FF:000047">
    <property type="entry name" value="Calcineurin subunit B type 1"/>
    <property type="match status" value="1"/>
</dbReference>
<dbReference type="Gene3D" id="1.10.238.10">
    <property type="entry name" value="EF-hand"/>
    <property type="match status" value="1"/>
</dbReference>
<dbReference type="InterPro" id="IPR011992">
    <property type="entry name" value="EF-hand-dom_pair"/>
</dbReference>
<dbReference type="InterPro" id="IPR018247">
    <property type="entry name" value="EF_Hand_1_Ca_BS"/>
</dbReference>
<dbReference type="InterPro" id="IPR002048">
    <property type="entry name" value="EF_hand_dom"/>
</dbReference>
<dbReference type="PANTHER" id="PTHR45942">
    <property type="entry name" value="PROTEIN PHOSPATASE 3 REGULATORY SUBUNIT B ALPHA ISOFORM TYPE 1"/>
    <property type="match status" value="1"/>
</dbReference>
<dbReference type="Pfam" id="PF13499">
    <property type="entry name" value="EF-hand_7"/>
    <property type="match status" value="2"/>
</dbReference>
<dbReference type="PRINTS" id="PR01697">
    <property type="entry name" value="PARVALBUMIN"/>
</dbReference>
<dbReference type="SMART" id="SM00054">
    <property type="entry name" value="EFh"/>
    <property type="match status" value="4"/>
</dbReference>
<dbReference type="SUPFAM" id="SSF47473">
    <property type="entry name" value="EF-hand"/>
    <property type="match status" value="1"/>
</dbReference>
<dbReference type="PROSITE" id="PS00018">
    <property type="entry name" value="EF_HAND_1"/>
    <property type="match status" value="4"/>
</dbReference>
<dbReference type="PROSITE" id="PS50222">
    <property type="entry name" value="EF_HAND_2"/>
    <property type="match status" value="4"/>
</dbReference>
<feature type="initiator methionine" description="Removed" evidence="2">
    <location>
        <position position="1"/>
    </location>
</feature>
<feature type="chain" id="PRO_0000073485" description="Calcineurin subunit B type 1">
    <location>
        <begin position="2"/>
        <end position="170"/>
    </location>
</feature>
<feature type="domain" description="EF-hand 1" evidence="3">
    <location>
        <begin position="18"/>
        <end position="46"/>
    </location>
</feature>
<feature type="domain" description="EF-hand 2" evidence="3">
    <location>
        <begin position="50"/>
        <end position="85"/>
    </location>
</feature>
<feature type="domain" description="EF-hand 3" evidence="3">
    <location>
        <begin position="87"/>
        <end position="122"/>
    </location>
</feature>
<feature type="domain" description="EF-hand 4" evidence="3">
    <location>
        <begin position="128"/>
        <end position="163"/>
    </location>
</feature>
<feature type="region of interest" description="Calcineurin A binding" evidence="7">
    <location>
        <begin position="131"/>
        <end position="136"/>
    </location>
</feature>
<feature type="binding site" evidence="3 7 10">
    <location>
        <position position="31"/>
    </location>
    <ligand>
        <name>Ca(2+)</name>
        <dbReference type="ChEBI" id="CHEBI:29108"/>
        <label>1</label>
    </ligand>
</feature>
<feature type="binding site" evidence="3 7 10">
    <location>
        <position position="33"/>
    </location>
    <ligand>
        <name>Ca(2+)</name>
        <dbReference type="ChEBI" id="CHEBI:29108"/>
        <label>1</label>
    </ligand>
</feature>
<feature type="binding site" evidence="3 7 10">
    <location>
        <position position="35"/>
    </location>
    <ligand>
        <name>Ca(2+)</name>
        <dbReference type="ChEBI" id="CHEBI:29108"/>
        <label>1</label>
    </ligand>
</feature>
<feature type="binding site" evidence="3 7 10">
    <location>
        <position position="37"/>
    </location>
    <ligand>
        <name>Ca(2+)</name>
        <dbReference type="ChEBI" id="CHEBI:29108"/>
        <label>1</label>
    </ligand>
</feature>
<feature type="binding site" evidence="3 7 10">
    <location>
        <position position="42"/>
    </location>
    <ligand>
        <name>Ca(2+)</name>
        <dbReference type="ChEBI" id="CHEBI:29108"/>
        <label>1</label>
    </ligand>
</feature>
<feature type="binding site" evidence="3 7 10">
    <location>
        <position position="63"/>
    </location>
    <ligand>
        <name>Ca(2+)</name>
        <dbReference type="ChEBI" id="CHEBI:29108"/>
        <label>2</label>
    </ligand>
</feature>
<feature type="binding site" evidence="3 7 10">
    <location>
        <position position="65"/>
    </location>
    <ligand>
        <name>Ca(2+)</name>
        <dbReference type="ChEBI" id="CHEBI:29108"/>
        <label>2</label>
    </ligand>
</feature>
<feature type="binding site" evidence="3 7 10">
    <location>
        <position position="67"/>
    </location>
    <ligand>
        <name>Ca(2+)</name>
        <dbReference type="ChEBI" id="CHEBI:29108"/>
        <label>2</label>
    </ligand>
</feature>
<feature type="binding site" evidence="3 7 10">
    <location>
        <position position="69"/>
    </location>
    <ligand>
        <name>Ca(2+)</name>
        <dbReference type="ChEBI" id="CHEBI:29108"/>
        <label>2</label>
    </ligand>
</feature>
<feature type="binding site" evidence="3 7 10">
    <location>
        <position position="74"/>
    </location>
    <ligand>
        <name>Ca(2+)</name>
        <dbReference type="ChEBI" id="CHEBI:29108"/>
        <label>2</label>
    </ligand>
</feature>
<feature type="binding site" evidence="3 7 10">
    <location>
        <position position="100"/>
    </location>
    <ligand>
        <name>Ca(2+)</name>
        <dbReference type="ChEBI" id="CHEBI:29108"/>
        <label>3</label>
    </ligand>
</feature>
<feature type="binding site" evidence="3 7 10">
    <location>
        <position position="102"/>
    </location>
    <ligand>
        <name>Ca(2+)</name>
        <dbReference type="ChEBI" id="CHEBI:29108"/>
        <label>3</label>
    </ligand>
</feature>
<feature type="binding site" evidence="3 7 10">
    <location>
        <position position="104"/>
    </location>
    <ligand>
        <name>Ca(2+)</name>
        <dbReference type="ChEBI" id="CHEBI:29108"/>
        <label>3</label>
    </ligand>
</feature>
<feature type="binding site" evidence="3 7 10">
    <location>
        <position position="106"/>
    </location>
    <ligand>
        <name>Ca(2+)</name>
        <dbReference type="ChEBI" id="CHEBI:29108"/>
        <label>3</label>
    </ligand>
</feature>
<feature type="binding site" evidence="3 7 10">
    <location>
        <position position="111"/>
    </location>
    <ligand>
        <name>Ca(2+)</name>
        <dbReference type="ChEBI" id="CHEBI:29108"/>
        <label>3</label>
    </ligand>
</feature>
<feature type="binding site" evidence="3 7 10">
    <location>
        <position position="141"/>
    </location>
    <ligand>
        <name>Ca(2+)</name>
        <dbReference type="ChEBI" id="CHEBI:29108"/>
        <label>4</label>
    </ligand>
</feature>
<feature type="binding site" evidence="3 7 10">
    <location>
        <position position="143"/>
    </location>
    <ligand>
        <name>Ca(2+)</name>
        <dbReference type="ChEBI" id="CHEBI:29108"/>
        <label>4</label>
    </ligand>
</feature>
<feature type="binding site" evidence="3 7 10">
    <location>
        <position position="145"/>
    </location>
    <ligand>
        <name>Ca(2+)</name>
        <dbReference type="ChEBI" id="CHEBI:29108"/>
        <label>4</label>
    </ligand>
</feature>
<feature type="binding site" evidence="3 7 10">
    <location>
        <position position="147"/>
    </location>
    <ligand>
        <name>Ca(2+)</name>
        <dbReference type="ChEBI" id="CHEBI:29108"/>
        <label>4</label>
    </ligand>
</feature>
<feature type="binding site" evidence="3 7 10">
    <location>
        <position position="152"/>
    </location>
    <ligand>
        <name>Ca(2+)</name>
        <dbReference type="ChEBI" id="CHEBI:29108"/>
        <label>4</label>
    </ligand>
</feature>
<feature type="site" description="Interaction with PxVP motif in substrates of the catalytic subunit" evidence="1">
    <location>
        <position position="118"/>
    </location>
</feature>
<feature type="site" description="Interaction with PxVP motif in substrates of the catalytic subunit" evidence="1">
    <location>
        <position position="122"/>
    </location>
</feature>
<feature type="modified residue" description="Phosphotyrosine" evidence="11">
    <location>
        <position position="106"/>
    </location>
</feature>
<feature type="lipid moiety-binding region" description="N-myristoyl glycine" evidence="1">
    <location>
        <position position="2"/>
    </location>
</feature>
<feature type="splice variant" id="VSP_024842" description="In isoform 2." evidence="8">
    <location>
        <begin position="1"/>
        <end position="10"/>
    </location>
</feature>
<feature type="sequence conflict" description="In Ref. 1; AAB23171." evidence="9" ref="1">
    <original>N</original>
    <variation>S</variation>
    <location>
        <position position="3"/>
    </location>
</feature>
<feature type="helix" evidence="12">
    <location>
        <begin position="17"/>
        <end position="30"/>
    </location>
</feature>
<feature type="helix" evidence="12">
    <location>
        <begin position="40"/>
        <end position="44"/>
    </location>
</feature>
<feature type="helix" evidence="12">
    <location>
        <begin position="48"/>
        <end position="51"/>
    </location>
</feature>
<feature type="helix" evidence="12">
    <location>
        <begin position="55"/>
        <end position="62"/>
    </location>
</feature>
<feature type="strand" evidence="12">
    <location>
        <begin position="67"/>
        <end position="69"/>
    </location>
</feature>
<feature type="helix" evidence="12">
    <location>
        <begin position="72"/>
        <end position="80"/>
    </location>
</feature>
<feature type="helix" evidence="12">
    <location>
        <begin position="88"/>
        <end position="99"/>
    </location>
</feature>
<feature type="strand" evidence="12">
    <location>
        <begin position="104"/>
        <end position="107"/>
    </location>
</feature>
<feature type="helix" evidence="12">
    <location>
        <begin position="109"/>
        <end position="120"/>
    </location>
</feature>
<feature type="helix" evidence="12">
    <location>
        <begin position="121"/>
        <end position="123"/>
    </location>
</feature>
<feature type="helix" evidence="12">
    <location>
        <begin position="126"/>
        <end position="140"/>
    </location>
</feature>
<feature type="strand" evidence="12">
    <location>
        <begin position="144"/>
        <end position="148"/>
    </location>
</feature>
<feature type="helix" evidence="12">
    <location>
        <begin position="150"/>
        <end position="157"/>
    </location>
</feature>
<feature type="helix" evidence="12">
    <location>
        <begin position="158"/>
        <end position="160"/>
    </location>
</feature>
<feature type="helix" evidence="12">
    <location>
        <begin position="162"/>
        <end position="165"/>
    </location>
</feature>
<sequence>MGNEASYPLEMCSHFDADEIKRLGKRFKKLDLDNSGSLSVEEFMSLPELQQNPLVQRVIDIFDTDGNGEVDFKEFIEGVSQFSVKGDKEQKLRFAFRIYDMDKDGYISNGELFQVLKMMVGNNLKDTQLQQIVDKTIINADKDGDGRISFEEFCAVVGGLDIHKKMVVDV</sequence>
<reference key="1">
    <citation type="journal article" date="1992" name="Biochem. Biophys. Res. Commun.">
        <title>Structure and expression of two isoforms of the murine calmodulin-dependent protein phosphatase regulatory subunit (calcineurin B).</title>
        <authorList>
            <person name="Ueki K."/>
            <person name="Muramatsu T."/>
            <person name="Kincaid R.L."/>
        </authorList>
    </citation>
    <scope>NUCLEOTIDE SEQUENCE [MRNA] (ISOFORM 1)</scope>
    <scope>TISSUE SPECIFICITY</scope>
    <source>
        <tissue>Brain</tissue>
    </source>
</reference>
<reference key="2">
    <citation type="journal article" date="2005" name="Science">
        <title>The transcriptional landscape of the mammalian genome.</title>
        <authorList>
            <person name="Carninci P."/>
            <person name="Kasukawa T."/>
            <person name="Katayama S."/>
            <person name="Gough J."/>
            <person name="Frith M.C."/>
            <person name="Maeda N."/>
            <person name="Oyama R."/>
            <person name="Ravasi T."/>
            <person name="Lenhard B."/>
            <person name="Wells C."/>
            <person name="Kodzius R."/>
            <person name="Shimokawa K."/>
            <person name="Bajic V.B."/>
            <person name="Brenner S.E."/>
            <person name="Batalov S."/>
            <person name="Forrest A.R."/>
            <person name="Zavolan M."/>
            <person name="Davis M.J."/>
            <person name="Wilming L.G."/>
            <person name="Aidinis V."/>
            <person name="Allen J.E."/>
            <person name="Ambesi-Impiombato A."/>
            <person name="Apweiler R."/>
            <person name="Aturaliya R.N."/>
            <person name="Bailey T.L."/>
            <person name="Bansal M."/>
            <person name="Baxter L."/>
            <person name="Beisel K.W."/>
            <person name="Bersano T."/>
            <person name="Bono H."/>
            <person name="Chalk A.M."/>
            <person name="Chiu K.P."/>
            <person name="Choudhary V."/>
            <person name="Christoffels A."/>
            <person name="Clutterbuck D.R."/>
            <person name="Crowe M.L."/>
            <person name="Dalla E."/>
            <person name="Dalrymple B.P."/>
            <person name="de Bono B."/>
            <person name="Della Gatta G."/>
            <person name="di Bernardo D."/>
            <person name="Down T."/>
            <person name="Engstrom P."/>
            <person name="Fagiolini M."/>
            <person name="Faulkner G."/>
            <person name="Fletcher C.F."/>
            <person name="Fukushima T."/>
            <person name="Furuno M."/>
            <person name="Futaki S."/>
            <person name="Gariboldi M."/>
            <person name="Georgii-Hemming P."/>
            <person name="Gingeras T.R."/>
            <person name="Gojobori T."/>
            <person name="Green R.E."/>
            <person name="Gustincich S."/>
            <person name="Harbers M."/>
            <person name="Hayashi Y."/>
            <person name="Hensch T.K."/>
            <person name="Hirokawa N."/>
            <person name="Hill D."/>
            <person name="Huminiecki L."/>
            <person name="Iacono M."/>
            <person name="Ikeo K."/>
            <person name="Iwama A."/>
            <person name="Ishikawa T."/>
            <person name="Jakt M."/>
            <person name="Kanapin A."/>
            <person name="Katoh M."/>
            <person name="Kawasawa Y."/>
            <person name="Kelso J."/>
            <person name="Kitamura H."/>
            <person name="Kitano H."/>
            <person name="Kollias G."/>
            <person name="Krishnan S.P."/>
            <person name="Kruger A."/>
            <person name="Kummerfeld S.K."/>
            <person name="Kurochkin I.V."/>
            <person name="Lareau L.F."/>
            <person name="Lazarevic D."/>
            <person name="Lipovich L."/>
            <person name="Liu J."/>
            <person name="Liuni S."/>
            <person name="McWilliam S."/>
            <person name="Madan Babu M."/>
            <person name="Madera M."/>
            <person name="Marchionni L."/>
            <person name="Matsuda H."/>
            <person name="Matsuzawa S."/>
            <person name="Miki H."/>
            <person name="Mignone F."/>
            <person name="Miyake S."/>
            <person name="Morris K."/>
            <person name="Mottagui-Tabar S."/>
            <person name="Mulder N."/>
            <person name="Nakano N."/>
            <person name="Nakauchi H."/>
            <person name="Ng P."/>
            <person name="Nilsson R."/>
            <person name="Nishiguchi S."/>
            <person name="Nishikawa S."/>
            <person name="Nori F."/>
            <person name="Ohara O."/>
            <person name="Okazaki Y."/>
            <person name="Orlando V."/>
            <person name="Pang K.C."/>
            <person name="Pavan W.J."/>
            <person name="Pavesi G."/>
            <person name="Pesole G."/>
            <person name="Petrovsky N."/>
            <person name="Piazza S."/>
            <person name="Reed J."/>
            <person name="Reid J.F."/>
            <person name="Ring B.Z."/>
            <person name="Ringwald M."/>
            <person name="Rost B."/>
            <person name="Ruan Y."/>
            <person name="Salzberg S.L."/>
            <person name="Sandelin A."/>
            <person name="Schneider C."/>
            <person name="Schoenbach C."/>
            <person name="Sekiguchi K."/>
            <person name="Semple C.A."/>
            <person name="Seno S."/>
            <person name="Sessa L."/>
            <person name="Sheng Y."/>
            <person name="Shibata Y."/>
            <person name="Shimada H."/>
            <person name="Shimada K."/>
            <person name="Silva D."/>
            <person name="Sinclair B."/>
            <person name="Sperling S."/>
            <person name="Stupka E."/>
            <person name="Sugiura K."/>
            <person name="Sultana R."/>
            <person name="Takenaka Y."/>
            <person name="Taki K."/>
            <person name="Tammoja K."/>
            <person name="Tan S.L."/>
            <person name="Tang S."/>
            <person name="Taylor M.S."/>
            <person name="Tegner J."/>
            <person name="Teichmann S.A."/>
            <person name="Ueda H.R."/>
            <person name="van Nimwegen E."/>
            <person name="Verardo R."/>
            <person name="Wei C.L."/>
            <person name="Yagi K."/>
            <person name="Yamanishi H."/>
            <person name="Zabarovsky E."/>
            <person name="Zhu S."/>
            <person name="Zimmer A."/>
            <person name="Hide W."/>
            <person name="Bult C."/>
            <person name="Grimmond S.M."/>
            <person name="Teasdale R.D."/>
            <person name="Liu E.T."/>
            <person name="Brusic V."/>
            <person name="Quackenbush J."/>
            <person name="Wahlestedt C."/>
            <person name="Mattick J.S."/>
            <person name="Hume D.A."/>
            <person name="Kai C."/>
            <person name="Sasaki D."/>
            <person name="Tomaru Y."/>
            <person name="Fukuda S."/>
            <person name="Kanamori-Katayama M."/>
            <person name="Suzuki M."/>
            <person name="Aoki J."/>
            <person name="Arakawa T."/>
            <person name="Iida J."/>
            <person name="Imamura K."/>
            <person name="Itoh M."/>
            <person name="Kato T."/>
            <person name="Kawaji H."/>
            <person name="Kawagashira N."/>
            <person name="Kawashima T."/>
            <person name="Kojima M."/>
            <person name="Kondo S."/>
            <person name="Konno H."/>
            <person name="Nakano K."/>
            <person name="Ninomiya N."/>
            <person name="Nishio T."/>
            <person name="Okada M."/>
            <person name="Plessy C."/>
            <person name="Shibata K."/>
            <person name="Shiraki T."/>
            <person name="Suzuki S."/>
            <person name="Tagami M."/>
            <person name="Waki K."/>
            <person name="Watahiki A."/>
            <person name="Okamura-Oho Y."/>
            <person name="Suzuki H."/>
            <person name="Kawai J."/>
            <person name="Hayashizaki Y."/>
        </authorList>
    </citation>
    <scope>NUCLEOTIDE SEQUENCE [LARGE SCALE MRNA] (ISOFORMS 1 AND 2)</scope>
    <source>
        <strain>C57BL/6J</strain>
        <tissue>Egg</tissue>
        <tissue>Head</tissue>
    </source>
</reference>
<reference key="3">
    <citation type="journal article" date="2009" name="PLoS Biol.">
        <title>Lineage-specific biology revealed by a finished genome assembly of the mouse.</title>
        <authorList>
            <person name="Church D.M."/>
            <person name="Goodstadt L."/>
            <person name="Hillier L.W."/>
            <person name="Zody M.C."/>
            <person name="Goldstein S."/>
            <person name="She X."/>
            <person name="Bult C.J."/>
            <person name="Agarwala R."/>
            <person name="Cherry J.L."/>
            <person name="DiCuccio M."/>
            <person name="Hlavina W."/>
            <person name="Kapustin Y."/>
            <person name="Meric P."/>
            <person name="Maglott D."/>
            <person name="Birtle Z."/>
            <person name="Marques A.C."/>
            <person name="Graves T."/>
            <person name="Zhou S."/>
            <person name="Teague B."/>
            <person name="Potamousis K."/>
            <person name="Churas C."/>
            <person name="Place M."/>
            <person name="Herschleb J."/>
            <person name="Runnheim R."/>
            <person name="Forrest D."/>
            <person name="Amos-Landgraf J."/>
            <person name="Schwartz D.C."/>
            <person name="Cheng Z."/>
            <person name="Lindblad-Toh K."/>
            <person name="Eichler E.E."/>
            <person name="Ponting C.P."/>
        </authorList>
    </citation>
    <scope>NUCLEOTIDE SEQUENCE [LARGE SCALE GENOMIC DNA]</scope>
    <source>
        <strain>C57BL/6J</strain>
    </source>
</reference>
<reference key="4">
    <citation type="journal article" date="2005" name="Proc. Natl. Acad. Sci. U.S.A.">
        <title>Calcineurin regulates bone formation by the osteoblast.</title>
        <authorList>
            <person name="Sun L."/>
            <person name="Blair H.C."/>
            <person name="Peng Y."/>
            <person name="Zaidi N."/>
            <person name="Adebanjo O.A."/>
            <person name="Wu X.B."/>
            <person name="Wu X.Y."/>
            <person name="Iqbal J."/>
            <person name="Epstein S."/>
            <person name="Abe E."/>
            <person name="Moonga B.S."/>
            <person name="Zaidi M."/>
        </authorList>
    </citation>
    <scope>TISSUE SPECIFICITY</scope>
</reference>
<reference key="5">
    <citation type="submission" date="2007-04" db="UniProtKB">
        <authorList>
            <person name="Lubec G."/>
            <person name="Klug S."/>
            <person name="Kang S.U."/>
        </authorList>
    </citation>
    <scope>PROTEIN SEQUENCE OF 58-85; 104-117; 126-135 AND 148-164</scope>
    <scope>IDENTIFICATION BY MASS SPECTROMETRY</scope>
    <source>
        <strain>C57BL/6J</strain>
        <tissue>Brain</tissue>
        <tissue>Hippocampus</tissue>
    </source>
</reference>
<reference key="6">
    <citation type="journal article" date="2008" name="J. Proteome Res.">
        <title>Large-scale identification and evolution indexing of tyrosine phosphorylation sites from murine brain.</title>
        <authorList>
            <person name="Ballif B.A."/>
            <person name="Carey G.R."/>
            <person name="Sunyaev S.R."/>
            <person name="Gygi S.P."/>
        </authorList>
    </citation>
    <scope>PHOSPHORYLATION [LARGE SCALE ANALYSIS] AT TYR-106</scope>
    <scope>IDENTIFICATION BY MASS SPECTROMETRY [LARGE SCALE ANALYSIS]</scope>
    <source>
        <tissue>Brain</tissue>
    </source>
</reference>
<reference key="7">
    <citation type="journal article" date="2010" name="Cell">
        <title>A tissue-specific atlas of mouse protein phosphorylation and expression.</title>
        <authorList>
            <person name="Huttlin E.L."/>
            <person name="Jedrychowski M.P."/>
            <person name="Elias J.E."/>
            <person name="Goswami T."/>
            <person name="Rad R."/>
            <person name="Beausoleil S.A."/>
            <person name="Villen J."/>
            <person name="Haas W."/>
            <person name="Sowa M.E."/>
            <person name="Gygi S.P."/>
        </authorList>
    </citation>
    <scope>IDENTIFICATION BY MASS SPECTROMETRY [LARGE SCALE ANALYSIS]</scope>
    <source>
        <tissue>Brain</tissue>
        <tissue>Brown adipose tissue</tissue>
        <tissue>Heart</tissue>
        <tissue>Kidney</tissue>
        <tissue>Liver</tissue>
        <tissue>Lung</tissue>
        <tissue>Pancreas</tissue>
        <tissue>Spleen</tissue>
        <tissue>Testis</tissue>
    </source>
</reference>
<reference key="8">
    <citation type="journal article" date="2010" name="Nat. Med.">
        <title>CIB1 is a regulator of pathological cardiac hypertrophy.</title>
        <authorList>
            <person name="Heineke J."/>
            <person name="Auger-Messier M."/>
            <person name="Correll R.N."/>
            <person name="Xu J."/>
            <person name="Benard M.J."/>
            <person name="Yuan W."/>
            <person name="Drexler H."/>
            <person name="Parise L.V."/>
            <person name="Molkentin J.D."/>
        </authorList>
    </citation>
    <scope>INTERACTION WITH CIB1</scope>
    <scope>SUBCELLULAR LOCATION</scope>
</reference>
<reference key="9">
    <citation type="journal article" date="2016" name="Cell Res.">
        <title>Cooperative autoinhibition and multi-level activation mechanisms of calcineurin.</title>
        <authorList>
            <person name="Li S.J."/>
            <person name="Wang J."/>
            <person name="Ma L."/>
            <person name="Lu C."/>
            <person name="Wang J."/>
            <person name="Wu J.W."/>
            <person name="Wang Z.X."/>
        </authorList>
    </citation>
    <scope>X-RAY CRYSTALLOGRAPHY (3.11 ANGSTROMS) IN COMPLEX WITH PPP3CA AND CALCIUM</scope>
    <scope>FUNCTION</scope>
</reference>
<comment type="function">
    <text evidence="7">Regulatory subunit of calcineurin, a calcium-dependent, calmodulin stimulated protein phosphatase. Confers calcium sensitivity.</text>
</comment>
<comment type="subunit">
    <text evidence="1 6 7">Forms a complex composed of a calmodulin-dependent catalytic subunit (also known as calcineurin A) and a regulatory Ca(2+)-binding subunit (also known as calcineurin B) (PubMed:26794871). There are three catalytic subunits, each encoded by a separate gene (PPP3CA, PPP3CB, and PPP3CC) and two regulatory subunits which are also encoded by separate genes (PPP3R1 and PPP3R2). The regulatory subunit confers calcium sensitivity. Interacts with catalytic subunit PPP3CA/calcineurin A (PubMed:26794871). Interacts with catalytic subunit PPP3CB/calcineurin A (By similarity). Isoform 1 and isoform 2 interact with CIB1 (via C-terminal region); the interaction increases upon cardiomyocyte hypertrophy (PubMed:20639889). Interacts with SPATA33 (via PQIIIT motif) (By similarity).</text>
</comment>
<comment type="interaction">
    <interactant intactId="EBI-6666164">
        <id>Q63810</id>
    </interactant>
    <interactant intactId="EBI-777493">
        <id>O35099</id>
        <label>Map3k5</label>
    </interactant>
    <organismsDiffer>false</organismsDiffer>
    <experiments>3</experiments>
</comment>
<comment type="subcellular location">
    <subcellularLocation>
        <location evidence="6">Cytoplasm</location>
        <location evidence="6">Cytosol</location>
    </subcellularLocation>
    <subcellularLocation>
        <location evidence="6">Cell membrane</location>
    </subcellularLocation>
    <subcellularLocation>
        <location evidence="6">Cell membrane</location>
        <location evidence="6">Sarcolemma</location>
    </subcellularLocation>
    <subcellularLocation>
        <location evidence="1">Cell membrane</location>
        <topology evidence="1">Lipid-anchor</topology>
    </subcellularLocation>
    <text evidence="6">Translocates from the cytosol to the sarcolemma in a CIB1-dependent manner during cardiomyocyte hypertrophy.</text>
</comment>
<comment type="alternative products">
    <event type="alternative splicing"/>
    <isoform>
        <id>Q63810-1</id>
        <name>1</name>
        <sequence type="displayed"/>
    </isoform>
    <isoform>
        <id>Q63810-2</id>
        <name>2</name>
        <sequence type="described" ref="VSP_024842"/>
    </isoform>
</comment>
<comment type="tissue specificity">
    <text evidence="4 5">Expressed in osteoblasts and bone marrow (at protein level) (PubMed:16286645). Expressed in the brain, kidney, liver, lung, muscle, ovary, spleen, thymus, heart and testis (PubMed:1325794).</text>
</comment>
<comment type="miscellaneous">
    <text evidence="7">This protein has four functional calcium-binding sites.</text>
</comment>
<comment type="similarity">
    <text evidence="9">Belongs to the calcineurin regulatory subunit family.</text>
</comment>
<gene>
    <name type="primary">Ppp3r1</name>
    <name type="synonym">Cnb</name>
</gene>
<proteinExistence type="evidence at protein level"/>
<name>CANB1_MOUSE</name>
<organism>
    <name type="scientific">Mus musculus</name>
    <name type="common">Mouse</name>
    <dbReference type="NCBI Taxonomy" id="10090"/>
    <lineage>
        <taxon>Eukaryota</taxon>
        <taxon>Metazoa</taxon>
        <taxon>Chordata</taxon>
        <taxon>Craniata</taxon>
        <taxon>Vertebrata</taxon>
        <taxon>Euteleostomi</taxon>
        <taxon>Mammalia</taxon>
        <taxon>Eutheria</taxon>
        <taxon>Euarchontoglires</taxon>
        <taxon>Glires</taxon>
        <taxon>Rodentia</taxon>
        <taxon>Myomorpha</taxon>
        <taxon>Muroidea</taxon>
        <taxon>Muridae</taxon>
        <taxon>Murinae</taxon>
        <taxon>Mus</taxon>
        <taxon>Mus</taxon>
    </lineage>
</organism>